<feature type="chain" id="PRO_0000065453" description="Uncharacterized protein T09A5.4">
    <location>
        <begin position="1"/>
        <end position="297"/>
    </location>
</feature>
<feature type="region of interest" description="Disordered" evidence="1">
    <location>
        <begin position="1"/>
        <end position="29"/>
    </location>
</feature>
<feature type="compositionally biased region" description="Basic and acidic residues" evidence="1">
    <location>
        <begin position="19"/>
        <end position="29"/>
    </location>
</feature>
<sequence length="297" mass="34977">MAESKAKNMFQKLSLTPKRNHEHDAGRNIETEEELLQKLKRLKLDNDYLHMWLSYEKLATIVENRSTDKTRKPEYGKLIFYYQGAAHALVSIWKRDSDLPFEQYISGDIARLFNKALDVAIRHMDPTVVHTIARDGGVALMSIDKPIEARDVLVRGENHLVAVPADGQLDFLERLIVLYYIMDSILIEERWNEYMVYTDKVWMMTMKEDKRCPLLENIIKEVEQVAVLLLVFQRKVECSERHKQLLASYRLDDWKAPIIKHNPPLSSLNPSEQKVFRRFLFYMMSNKRSVDKVLKHR</sequence>
<protein>
    <recommendedName>
        <fullName>Uncharacterized protein T09A5.4</fullName>
    </recommendedName>
</protein>
<proteinExistence type="predicted"/>
<evidence type="ECO:0000256" key="1">
    <source>
        <dbReference type="SAM" id="MobiDB-lite"/>
    </source>
</evidence>
<keyword id="KW-1185">Reference proteome</keyword>
<gene>
    <name type="ORF">T09A5.4</name>
</gene>
<organism>
    <name type="scientific">Caenorhabditis elegans</name>
    <dbReference type="NCBI Taxonomy" id="6239"/>
    <lineage>
        <taxon>Eukaryota</taxon>
        <taxon>Metazoa</taxon>
        <taxon>Ecdysozoa</taxon>
        <taxon>Nematoda</taxon>
        <taxon>Chromadorea</taxon>
        <taxon>Rhabditida</taxon>
        <taxon>Rhabditina</taxon>
        <taxon>Rhabditomorpha</taxon>
        <taxon>Rhabditoidea</taxon>
        <taxon>Rhabditidae</taxon>
        <taxon>Peloderinae</taxon>
        <taxon>Caenorhabditis</taxon>
    </lineage>
</organism>
<reference key="1">
    <citation type="journal article" date="1998" name="Science">
        <title>Genome sequence of the nematode C. elegans: a platform for investigating biology.</title>
        <authorList>
            <consortium name="The C. elegans sequencing consortium"/>
        </authorList>
    </citation>
    <scope>NUCLEOTIDE SEQUENCE [LARGE SCALE GENOMIC DNA]</scope>
    <source>
        <strain>Bristol N2</strain>
    </source>
</reference>
<name>YNZ4_CAEEL</name>
<accession>P45964</accession>
<dbReference type="EMBL" id="Z36753">
    <property type="protein sequence ID" value="CAA85332.1"/>
    <property type="molecule type" value="Genomic_DNA"/>
</dbReference>
<dbReference type="PIR" id="T24718">
    <property type="entry name" value="T24718"/>
</dbReference>
<dbReference type="RefSeq" id="NP_495648.1">
    <property type="nucleotide sequence ID" value="NM_063247.3"/>
</dbReference>
<dbReference type="SMR" id="P45964"/>
<dbReference type="FunCoup" id="P45964">
    <property type="interactions" value="7"/>
</dbReference>
<dbReference type="PaxDb" id="6239-T09A5.4"/>
<dbReference type="EnsemblMetazoa" id="T09A5.4.1">
    <property type="protein sequence ID" value="T09A5.4.1"/>
    <property type="gene ID" value="WBGene00011633"/>
</dbReference>
<dbReference type="GeneID" id="188310"/>
<dbReference type="KEGG" id="cel:CELE_T09A5.4"/>
<dbReference type="UCSC" id="T09A5.4">
    <property type="organism name" value="c. elegans"/>
</dbReference>
<dbReference type="AGR" id="WB:WBGene00011633"/>
<dbReference type="CTD" id="188310"/>
<dbReference type="WormBase" id="T09A5.4">
    <property type="protein sequence ID" value="CE01085"/>
    <property type="gene ID" value="WBGene00011633"/>
</dbReference>
<dbReference type="eggNOG" id="ENOG502TG0Q">
    <property type="taxonomic scope" value="Eukaryota"/>
</dbReference>
<dbReference type="HOGENOM" id="CLU_937612_0_0_1"/>
<dbReference type="InParanoid" id="P45964"/>
<dbReference type="OMA" id="CSERHKQ"/>
<dbReference type="OrthoDB" id="5786614at2759"/>
<dbReference type="PRO" id="PR:P45964"/>
<dbReference type="Proteomes" id="UP000001940">
    <property type="component" value="Chromosome II"/>
</dbReference>
<dbReference type="Bgee" id="WBGene00011633">
    <property type="expression patterns" value="Expressed in pharyngeal muscle cell (C elegans) and 3 other cell types or tissues"/>
</dbReference>